<sequence length="89" mass="9952">MNFSIFLFLIGILGFVLNRKNIILMLISIEIMLLAITFLILISSFNFDDILGQTFAIYIITIAGAESAIGLGILVAYYRLRGSISIQYK</sequence>
<evidence type="ECO:0000250" key="1"/>
<evidence type="ECO:0000255" key="2"/>
<evidence type="ECO:0000305" key="3"/>
<feature type="chain" id="PRO_0000118467" description="NADH-ubiquinone oxidoreductase chain 4L">
    <location>
        <begin position="1"/>
        <end position="89"/>
    </location>
</feature>
<feature type="transmembrane region" description="Helical" evidence="2">
    <location>
        <begin position="1"/>
        <end position="21"/>
    </location>
</feature>
<feature type="transmembrane region" description="Helical" evidence="2">
    <location>
        <begin position="22"/>
        <end position="42"/>
    </location>
</feature>
<feature type="transmembrane region" description="Helical" evidence="2">
    <location>
        <begin position="55"/>
        <end position="75"/>
    </location>
</feature>
<reference key="1">
    <citation type="journal article" date="2003" name="FEBS Lett.">
        <title>The mitochondrial genome of the thermal dimorphic fungus Penicillium marneffei is more closely related to those of molds than yeasts.</title>
        <authorList>
            <person name="Woo P.C.Y."/>
            <person name="Zhen H."/>
            <person name="Cai J.J."/>
            <person name="Yu J."/>
            <person name="Lau S.K.P."/>
            <person name="Wang J."/>
            <person name="Teng J.L.L."/>
            <person name="Wong S.S.Y."/>
            <person name="Tse R.H."/>
            <person name="Chen R."/>
            <person name="Yang H."/>
            <person name="Liu B."/>
            <person name="Yuen K.-Y."/>
        </authorList>
    </citation>
    <scope>NUCLEOTIDE SEQUENCE [LARGE SCALE GENOMIC DNA]</scope>
    <source>
        <strain>MP1</strain>
    </source>
</reference>
<name>NU4LM_TALMA</name>
<comment type="function">
    <text evidence="1">Core subunit of the mitochondrial membrane respiratory chain NADH dehydrogenase (Complex I) that is believed to belong to the minimal assembly required for catalysis. Complex I functions in the transfer of electrons from NADH to the respiratory chain. The immediate electron acceptor for the enzyme is believed to be ubiquinone (By similarity).</text>
</comment>
<comment type="catalytic activity">
    <reaction>
        <text>a ubiquinone + NADH + 5 H(+)(in) = a ubiquinol + NAD(+) + 4 H(+)(out)</text>
        <dbReference type="Rhea" id="RHEA:29091"/>
        <dbReference type="Rhea" id="RHEA-COMP:9565"/>
        <dbReference type="Rhea" id="RHEA-COMP:9566"/>
        <dbReference type="ChEBI" id="CHEBI:15378"/>
        <dbReference type="ChEBI" id="CHEBI:16389"/>
        <dbReference type="ChEBI" id="CHEBI:17976"/>
        <dbReference type="ChEBI" id="CHEBI:57540"/>
        <dbReference type="ChEBI" id="CHEBI:57945"/>
        <dbReference type="EC" id="7.1.1.2"/>
    </reaction>
</comment>
<comment type="subcellular location">
    <subcellularLocation>
        <location evidence="1">Mitochondrion membrane</location>
        <topology evidence="1">Multi-pass membrane protein</topology>
    </subcellularLocation>
</comment>
<comment type="similarity">
    <text evidence="3">Belongs to the complex I subunit 4L family.</text>
</comment>
<accession>Q6V9E0</accession>
<organism>
    <name type="scientific">Talaromyces marneffei</name>
    <name type="common">Penicillium marneffei</name>
    <dbReference type="NCBI Taxonomy" id="37727"/>
    <lineage>
        <taxon>Eukaryota</taxon>
        <taxon>Fungi</taxon>
        <taxon>Dikarya</taxon>
        <taxon>Ascomycota</taxon>
        <taxon>Pezizomycotina</taxon>
        <taxon>Eurotiomycetes</taxon>
        <taxon>Eurotiomycetidae</taxon>
        <taxon>Eurotiales</taxon>
        <taxon>Trichocomaceae</taxon>
        <taxon>Talaromyces</taxon>
        <taxon>Talaromyces sect. Talaromyces</taxon>
    </lineage>
</organism>
<geneLocation type="mitochondrion"/>
<gene>
    <name type="primary">nd4L</name>
    <name type="synonym">nad4L</name>
</gene>
<proteinExistence type="inferred from homology"/>
<protein>
    <recommendedName>
        <fullName>NADH-ubiquinone oxidoreductase chain 4L</fullName>
        <ecNumber>7.1.1.2</ecNumber>
    </recommendedName>
    <alternativeName>
        <fullName>NADH dehydrogenase subunit 4L</fullName>
    </alternativeName>
</protein>
<keyword id="KW-0249">Electron transport</keyword>
<keyword id="KW-0472">Membrane</keyword>
<keyword id="KW-0496">Mitochondrion</keyword>
<keyword id="KW-0520">NAD</keyword>
<keyword id="KW-0679">Respiratory chain</keyword>
<keyword id="KW-1278">Translocase</keyword>
<keyword id="KW-0812">Transmembrane</keyword>
<keyword id="KW-1133">Transmembrane helix</keyword>
<keyword id="KW-0813">Transport</keyword>
<keyword id="KW-0830">Ubiquinone</keyword>
<dbReference type="EC" id="7.1.1.2"/>
<dbReference type="EMBL" id="AY347307">
    <property type="protein sequence ID" value="AAQ54910.1"/>
    <property type="molecule type" value="Genomic_DNA"/>
</dbReference>
<dbReference type="RefSeq" id="NP_943709.1">
    <property type="nucleotide sequence ID" value="NC_005256.1"/>
</dbReference>
<dbReference type="SMR" id="Q6V9E0"/>
<dbReference type="GeneID" id="2657833"/>
<dbReference type="VEuPathDB" id="FungiDB:PMAA_m0540"/>
<dbReference type="GO" id="GO:0031966">
    <property type="term" value="C:mitochondrial membrane"/>
    <property type="evidence" value="ECO:0007669"/>
    <property type="project" value="UniProtKB-SubCell"/>
</dbReference>
<dbReference type="GO" id="GO:0030964">
    <property type="term" value="C:NADH dehydrogenase complex"/>
    <property type="evidence" value="ECO:0007669"/>
    <property type="project" value="TreeGrafter"/>
</dbReference>
<dbReference type="GO" id="GO:0008137">
    <property type="term" value="F:NADH dehydrogenase (ubiquinone) activity"/>
    <property type="evidence" value="ECO:0007669"/>
    <property type="project" value="UniProtKB-EC"/>
</dbReference>
<dbReference type="GO" id="GO:0042773">
    <property type="term" value="P:ATP synthesis coupled electron transport"/>
    <property type="evidence" value="ECO:0007669"/>
    <property type="project" value="InterPro"/>
</dbReference>
<dbReference type="FunFam" id="1.10.287.3510:FF:000004">
    <property type="entry name" value="NADH-ubiquinone oxidoreductase chain 4L"/>
    <property type="match status" value="1"/>
</dbReference>
<dbReference type="Gene3D" id="1.10.287.3510">
    <property type="match status" value="1"/>
</dbReference>
<dbReference type="InterPro" id="IPR001133">
    <property type="entry name" value="NADH_UbQ_OxRdtase_chain4L/K"/>
</dbReference>
<dbReference type="InterPro" id="IPR039428">
    <property type="entry name" value="NUOK/Mnh_C1-like"/>
</dbReference>
<dbReference type="NCBIfam" id="NF004320">
    <property type="entry name" value="PRK05715.1-2"/>
    <property type="match status" value="1"/>
</dbReference>
<dbReference type="PANTHER" id="PTHR11434:SF16">
    <property type="entry name" value="NADH-UBIQUINONE OXIDOREDUCTASE CHAIN 4L"/>
    <property type="match status" value="1"/>
</dbReference>
<dbReference type="PANTHER" id="PTHR11434">
    <property type="entry name" value="NADH-UBIQUINONE OXIDOREDUCTASE SUBUNIT ND4L"/>
    <property type="match status" value="1"/>
</dbReference>
<dbReference type="Pfam" id="PF00420">
    <property type="entry name" value="Oxidored_q2"/>
    <property type="match status" value="1"/>
</dbReference>